<feature type="chain" id="PRO_0000128633" description="Polyphosphate kinase">
    <location>
        <begin position="1"/>
        <end position="702"/>
    </location>
</feature>
<feature type="active site" description="Phosphohistidine intermediate" evidence="1">
    <location>
        <position position="449"/>
    </location>
</feature>
<feature type="binding site" evidence="1">
    <location>
        <position position="55"/>
    </location>
    <ligand>
        <name>ATP</name>
        <dbReference type="ChEBI" id="CHEBI:30616"/>
    </ligand>
</feature>
<feature type="binding site" evidence="1">
    <location>
        <position position="389"/>
    </location>
    <ligand>
        <name>Mg(2+)</name>
        <dbReference type="ChEBI" id="CHEBI:18420"/>
    </ligand>
</feature>
<feature type="binding site" evidence="1">
    <location>
        <position position="419"/>
    </location>
    <ligand>
        <name>Mg(2+)</name>
        <dbReference type="ChEBI" id="CHEBI:18420"/>
    </ligand>
</feature>
<feature type="binding site" evidence="1">
    <location>
        <position position="482"/>
    </location>
    <ligand>
        <name>ATP</name>
        <dbReference type="ChEBI" id="CHEBI:30616"/>
    </ligand>
</feature>
<feature type="binding site" evidence="1">
    <location>
        <position position="578"/>
    </location>
    <ligand>
        <name>ATP</name>
        <dbReference type="ChEBI" id="CHEBI:30616"/>
    </ligand>
</feature>
<feature type="binding site" evidence="1">
    <location>
        <position position="606"/>
    </location>
    <ligand>
        <name>ATP</name>
        <dbReference type="ChEBI" id="CHEBI:30616"/>
    </ligand>
</feature>
<proteinExistence type="inferred from homology"/>
<evidence type="ECO:0000255" key="1">
    <source>
        <dbReference type="HAMAP-Rule" id="MF_00347"/>
    </source>
</evidence>
<reference key="1">
    <citation type="journal article" date="2003" name="Nature">
        <title>The genome sequence of Bacillus anthracis Ames and comparison to closely related bacteria.</title>
        <authorList>
            <person name="Read T.D."/>
            <person name="Peterson S.N."/>
            <person name="Tourasse N.J."/>
            <person name="Baillie L.W."/>
            <person name="Paulsen I.T."/>
            <person name="Nelson K.E."/>
            <person name="Tettelin H."/>
            <person name="Fouts D.E."/>
            <person name="Eisen J.A."/>
            <person name="Gill S.R."/>
            <person name="Holtzapple E.K."/>
            <person name="Okstad O.A."/>
            <person name="Helgason E."/>
            <person name="Rilstone J."/>
            <person name="Wu M."/>
            <person name="Kolonay J.F."/>
            <person name="Beanan M.J."/>
            <person name="Dodson R.J."/>
            <person name="Brinkac L.M."/>
            <person name="Gwinn M.L."/>
            <person name="DeBoy R.T."/>
            <person name="Madpu R."/>
            <person name="Daugherty S.C."/>
            <person name="Durkin A.S."/>
            <person name="Haft D.H."/>
            <person name="Nelson W.C."/>
            <person name="Peterson J.D."/>
            <person name="Pop M."/>
            <person name="Khouri H.M."/>
            <person name="Radune D."/>
            <person name="Benton J.L."/>
            <person name="Mahamoud Y."/>
            <person name="Jiang L."/>
            <person name="Hance I.R."/>
            <person name="Weidman J.F."/>
            <person name="Berry K.J."/>
            <person name="Plaut R.D."/>
            <person name="Wolf A.M."/>
            <person name="Watkins K.L."/>
            <person name="Nierman W.C."/>
            <person name="Hazen A."/>
            <person name="Cline R.T."/>
            <person name="Redmond C."/>
            <person name="Thwaite J.E."/>
            <person name="White O."/>
            <person name="Salzberg S.L."/>
            <person name="Thomason B."/>
            <person name="Friedlander A.M."/>
            <person name="Koehler T.M."/>
            <person name="Hanna P.C."/>
            <person name="Kolstoe A.-B."/>
            <person name="Fraser C.M."/>
        </authorList>
    </citation>
    <scope>NUCLEOTIDE SEQUENCE [LARGE SCALE GENOMIC DNA]</scope>
    <source>
        <strain>Ames / isolate Porton</strain>
    </source>
</reference>
<reference key="2">
    <citation type="journal article" date="2009" name="J. Bacteriol.">
        <title>The complete genome sequence of Bacillus anthracis Ames 'Ancestor'.</title>
        <authorList>
            <person name="Ravel J."/>
            <person name="Jiang L."/>
            <person name="Stanley S.T."/>
            <person name="Wilson M.R."/>
            <person name="Decker R.S."/>
            <person name="Read T.D."/>
            <person name="Worsham P."/>
            <person name="Keim P.S."/>
            <person name="Salzberg S.L."/>
            <person name="Fraser-Liggett C.M."/>
            <person name="Rasko D.A."/>
        </authorList>
    </citation>
    <scope>NUCLEOTIDE SEQUENCE [LARGE SCALE GENOMIC DNA]</scope>
    <source>
        <strain>Ames ancestor</strain>
    </source>
</reference>
<reference key="3">
    <citation type="submission" date="2004-01" db="EMBL/GenBank/DDBJ databases">
        <title>Complete genome sequence of Bacillus anthracis Sterne.</title>
        <authorList>
            <person name="Brettin T.S."/>
            <person name="Bruce D."/>
            <person name="Challacombe J.F."/>
            <person name="Gilna P."/>
            <person name="Han C."/>
            <person name="Hill K."/>
            <person name="Hitchcock P."/>
            <person name="Jackson P."/>
            <person name="Keim P."/>
            <person name="Longmire J."/>
            <person name="Lucas S."/>
            <person name="Okinaka R."/>
            <person name="Richardson P."/>
            <person name="Rubin E."/>
            <person name="Tice H."/>
        </authorList>
    </citation>
    <scope>NUCLEOTIDE SEQUENCE [LARGE SCALE GENOMIC DNA]</scope>
    <source>
        <strain>Sterne</strain>
    </source>
</reference>
<sequence length="702" mass="80997">MELSKGNIVNLNDTAYYNNRELSWLAFNERVLQEAQDETNPLLERLKFISIFSSNLDEFFMVRVAGLKDQVSAGFNQPENKAGLTPKKQLNKIAIKAHELMTVQYGTFKNYVLPALELEGIERLTFHDLTKEQREFIEEYFDEQIFPVLTPVAIDAYRPFPMLLNKSLNLATLLYDEKQVEEENRTKLGIVQVPSLLERFIFLPSEGQKHKFILLEDVISSFTHKLFTGYKVSSVTRFRITRNADLTIHEEGARDLLKVIEKELKKRKWGAAVRLEVGKEHIDERVLALLYEVLEVKDEDVYIMDGPLDLTCLFSLYKKLAPLYEHLVYPALIPQRPQDLGDAEDVFEKAIEHDILLHHPFESFQPVVDFVRDAADDPNVLAIKQTLYRVSGDSPIIQALKIAAEKGKQVTVLVELKARFDEENNVHWAKELEQAGCHVIYGVSHLKTHSKITLVVRRKNGKIERFVHLGTGNYNDATAKLYTDFGYITSRKDFGVDATNFFNYLSGYTTKPHFHHLSVAPFDIREQFMDLIDEEIRYHRQYGNGYIIAKMNSLTDKPLIKKMYEASQAGVKVELIVRGTCCLRPGIPNVSENIRVVSVVGRYLEHSRIYYFHHNGEEKIYLSSADWMTRNMEKRVEISFPILDIEMKARIKAILQLTLADNVKTREQNKDGDYYYVINSGAEEIDSQVKLFKMAYQNTDAE</sequence>
<gene>
    <name evidence="1" type="primary">ppk</name>
    <name type="ordered locus">BA_4208</name>
    <name type="ordered locus">GBAA_4208</name>
    <name type="ordered locus">BAS3903</name>
</gene>
<keyword id="KW-0067">ATP-binding</keyword>
<keyword id="KW-0418">Kinase</keyword>
<keyword id="KW-0460">Magnesium</keyword>
<keyword id="KW-0479">Metal-binding</keyword>
<keyword id="KW-0547">Nucleotide-binding</keyword>
<keyword id="KW-0597">Phosphoprotein</keyword>
<keyword id="KW-1185">Reference proteome</keyword>
<keyword id="KW-0808">Transferase</keyword>
<comment type="function">
    <text evidence="1">Catalyzes the reversible transfer of the terminal phosphate of ATP to form a long-chain polyphosphate (polyP).</text>
</comment>
<comment type="catalytic activity">
    <reaction evidence="1">
        <text>[phosphate](n) + ATP = [phosphate](n+1) + ADP</text>
        <dbReference type="Rhea" id="RHEA:19573"/>
        <dbReference type="Rhea" id="RHEA-COMP:9859"/>
        <dbReference type="Rhea" id="RHEA-COMP:14280"/>
        <dbReference type="ChEBI" id="CHEBI:16838"/>
        <dbReference type="ChEBI" id="CHEBI:30616"/>
        <dbReference type="ChEBI" id="CHEBI:456216"/>
        <dbReference type="EC" id="2.7.4.1"/>
    </reaction>
</comment>
<comment type="cofactor">
    <cofactor evidence="1">
        <name>Mg(2+)</name>
        <dbReference type="ChEBI" id="CHEBI:18420"/>
    </cofactor>
</comment>
<comment type="PTM">
    <text evidence="1">An intermediate of this reaction is the autophosphorylated ppk in which a phosphate is covalently linked to a histidine residue through a N-P bond.</text>
</comment>
<comment type="similarity">
    <text evidence="1">Belongs to the polyphosphate kinase 1 (PPK1) family.</text>
</comment>
<name>PPK1_BACAN</name>
<dbReference type="EC" id="2.7.4.1" evidence="1"/>
<dbReference type="EMBL" id="AE016879">
    <property type="protein sequence ID" value="AAP27929.1"/>
    <property type="molecule type" value="Genomic_DNA"/>
</dbReference>
<dbReference type="EMBL" id="AE017334">
    <property type="protein sequence ID" value="AAT33325.1"/>
    <property type="molecule type" value="Genomic_DNA"/>
</dbReference>
<dbReference type="EMBL" id="AE017225">
    <property type="protein sequence ID" value="AAT56204.1"/>
    <property type="molecule type" value="Genomic_DNA"/>
</dbReference>
<dbReference type="RefSeq" id="NP_846443.1">
    <property type="nucleotide sequence ID" value="NC_003997.3"/>
</dbReference>
<dbReference type="RefSeq" id="WP_000423561.1">
    <property type="nucleotide sequence ID" value="NZ_WXXJ01000027.1"/>
</dbReference>
<dbReference type="RefSeq" id="YP_030153.1">
    <property type="nucleotide sequence ID" value="NC_005945.1"/>
</dbReference>
<dbReference type="SMR" id="Q81MN9"/>
<dbReference type="IntAct" id="Q81MN9">
    <property type="interactions" value="6"/>
</dbReference>
<dbReference type="STRING" id="261594.GBAA_4208"/>
<dbReference type="DNASU" id="1088872"/>
<dbReference type="GeneID" id="45023881"/>
<dbReference type="KEGG" id="ban:BA_4208"/>
<dbReference type="KEGG" id="bar:GBAA_4208"/>
<dbReference type="KEGG" id="bat:BAS3903"/>
<dbReference type="PATRIC" id="fig|198094.11.peg.4177"/>
<dbReference type="eggNOG" id="COG0855">
    <property type="taxonomic scope" value="Bacteria"/>
</dbReference>
<dbReference type="HOGENOM" id="CLU_009678_5_0_9"/>
<dbReference type="OMA" id="MTLYRVG"/>
<dbReference type="OrthoDB" id="9761456at2"/>
<dbReference type="Proteomes" id="UP000000427">
    <property type="component" value="Chromosome"/>
</dbReference>
<dbReference type="Proteomes" id="UP000000594">
    <property type="component" value="Chromosome"/>
</dbReference>
<dbReference type="GO" id="GO:0009358">
    <property type="term" value="C:polyphosphate kinase complex"/>
    <property type="evidence" value="ECO:0007669"/>
    <property type="project" value="InterPro"/>
</dbReference>
<dbReference type="GO" id="GO:0005524">
    <property type="term" value="F:ATP binding"/>
    <property type="evidence" value="ECO:0007669"/>
    <property type="project" value="UniProtKB-KW"/>
</dbReference>
<dbReference type="GO" id="GO:0046872">
    <property type="term" value="F:metal ion binding"/>
    <property type="evidence" value="ECO:0007669"/>
    <property type="project" value="UniProtKB-KW"/>
</dbReference>
<dbReference type="GO" id="GO:0008976">
    <property type="term" value="F:polyphosphate kinase activity"/>
    <property type="evidence" value="ECO:0007669"/>
    <property type="project" value="UniProtKB-UniRule"/>
</dbReference>
<dbReference type="GO" id="GO:0006799">
    <property type="term" value="P:polyphosphate biosynthetic process"/>
    <property type="evidence" value="ECO:0007669"/>
    <property type="project" value="UniProtKB-UniRule"/>
</dbReference>
<dbReference type="CDD" id="cd09165">
    <property type="entry name" value="PLDc_PaPPK1_C1_like"/>
    <property type="match status" value="1"/>
</dbReference>
<dbReference type="CDD" id="cd09168">
    <property type="entry name" value="PLDc_PaPPK1_C2_like"/>
    <property type="match status" value="1"/>
</dbReference>
<dbReference type="Gene3D" id="3.30.870.10">
    <property type="entry name" value="Endonuclease Chain A"/>
    <property type="match status" value="2"/>
</dbReference>
<dbReference type="Gene3D" id="3.30.1840.10">
    <property type="entry name" value="Polyphosphate kinase middle domain"/>
    <property type="match status" value="1"/>
</dbReference>
<dbReference type="Gene3D" id="1.20.58.310">
    <property type="entry name" value="Polyphosphate kinase N-terminal domain"/>
    <property type="match status" value="1"/>
</dbReference>
<dbReference type="HAMAP" id="MF_00347">
    <property type="entry name" value="Polyphosphate_kinase"/>
    <property type="match status" value="1"/>
</dbReference>
<dbReference type="InterPro" id="IPR003414">
    <property type="entry name" value="PP_kinase"/>
</dbReference>
<dbReference type="InterPro" id="IPR041108">
    <property type="entry name" value="PP_kinase_C_1"/>
</dbReference>
<dbReference type="InterPro" id="IPR024953">
    <property type="entry name" value="PP_kinase_middle"/>
</dbReference>
<dbReference type="InterPro" id="IPR036830">
    <property type="entry name" value="PP_kinase_middle_dom_sf"/>
</dbReference>
<dbReference type="InterPro" id="IPR025200">
    <property type="entry name" value="PPK_C_dom2"/>
</dbReference>
<dbReference type="InterPro" id="IPR025198">
    <property type="entry name" value="PPK_N_dom"/>
</dbReference>
<dbReference type="InterPro" id="IPR036832">
    <property type="entry name" value="PPK_N_dom_sf"/>
</dbReference>
<dbReference type="NCBIfam" id="TIGR03705">
    <property type="entry name" value="poly_P_kin"/>
    <property type="match status" value="1"/>
</dbReference>
<dbReference type="NCBIfam" id="NF003917">
    <property type="entry name" value="PRK05443.1-1"/>
    <property type="match status" value="1"/>
</dbReference>
<dbReference type="NCBIfam" id="NF003918">
    <property type="entry name" value="PRK05443.1-2"/>
    <property type="match status" value="1"/>
</dbReference>
<dbReference type="NCBIfam" id="NF003920">
    <property type="entry name" value="PRK05443.2-1"/>
    <property type="match status" value="1"/>
</dbReference>
<dbReference type="NCBIfam" id="NF003921">
    <property type="entry name" value="PRK05443.2-2"/>
    <property type="match status" value="1"/>
</dbReference>
<dbReference type="PANTHER" id="PTHR30218">
    <property type="entry name" value="POLYPHOSPHATE KINASE"/>
    <property type="match status" value="1"/>
</dbReference>
<dbReference type="PANTHER" id="PTHR30218:SF0">
    <property type="entry name" value="POLYPHOSPHATE KINASE"/>
    <property type="match status" value="1"/>
</dbReference>
<dbReference type="Pfam" id="PF02503">
    <property type="entry name" value="PP_kinase"/>
    <property type="match status" value="1"/>
</dbReference>
<dbReference type="Pfam" id="PF13090">
    <property type="entry name" value="PP_kinase_C"/>
    <property type="match status" value="1"/>
</dbReference>
<dbReference type="Pfam" id="PF17941">
    <property type="entry name" value="PP_kinase_C_1"/>
    <property type="match status" value="1"/>
</dbReference>
<dbReference type="Pfam" id="PF13089">
    <property type="entry name" value="PP_kinase_N"/>
    <property type="match status" value="1"/>
</dbReference>
<dbReference type="PIRSF" id="PIRSF015589">
    <property type="entry name" value="PP_kinase"/>
    <property type="match status" value="1"/>
</dbReference>
<dbReference type="SUPFAM" id="SSF56024">
    <property type="entry name" value="Phospholipase D/nuclease"/>
    <property type="match status" value="2"/>
</dbReference>
<dbReference type="SUPFAM" id="SSF143724">
    <property type="entry name" value="PHP14-like"/>
    <property type="match status" value="1"/>
</dbReference>
<dbReference type="SUPFAM" id="SSF140356">
    <property type="entry name" value="PPK N-terminal domain-like"/>
    <property type="match status" value="1"/>
</dbReference>
<accession>Q81MN9</accession>
<accession>Q6HU35</accession>
<accession>Q6KNB9</accession>
<protein>
    <recommendedName>
        <fullName evidence="1">Polyphosphate kinase</fullName>
        <ecNumber evidence="1">2.7.4.1</ecNumber>
    </recommendedName>
    <alternativeName>
        <fullName evidence="1">ATP-polyphosphate phosphotransferase</fullName>
    </alternativeName>
    <alternativeName>
        <fullName evidence="1">Polyphosphoric acid kinase</fullName>
    </alternativeName>
</protein>
<organism>
    <name type="scientific">Bacillus anthracis</name>
    <dbReference type="NCBI Taxonomy" id="1392"/>
    <lineage>
        <taxon>Bacteria</taxon>
        <taxon>Bacillati</taxon>
        <taxon>Bacillota</taxon>
        <taxon>Bacilli</taxon>
        <taxon>Bacillales</taxon>
        <taxon>Bacillaceae</taxon>
        <taxon>Bacillus</taxon>
        <taxon>Bacillus cereus group</taxon>
    </lineage>
</organism>